<comment type="function">
    <text evidence="1">Glutaredoxin necessary for virion morphogenesis and virus replication. Functions as a thiol-disulfide transfer protein between membrane-associated OPG128 and substrates OPG095 or OPG053. The complete pathway for formation of disulfide bonds in intracellular virion membrane proteins sequentially involves oxidation of OPG072, OPG128 and OPG088. Exhibit thioltransferase and dehydroascorbate reductase activities in vitro.</text>
</comment>
<comment type="subunit">
    <text evidence="1">Homodimer.</text>
</comment>
<comment type="subcellular location">
    <subcellularLocation>
        <location evidence="1">Host cytoplasm</location>
    </subcellularLocation>
</comment>
<comment type="induction">
    <text evidence="1">Expressed in the intermediate phase of the viral replicative cycle.</text>
</comment>
<comment type="similarity">
    <text evidence="2">Belongs to the glutaredoxin family.</text>
</comment>
<feature type="chain" id="PRO_0000141630" description="Glutaredoxin-2">
    <location>
        <begin position="1"/>
        <end position="124"/>
    </location>
</feature>
<feature type="disulfide bond" description="Redox-active" evidence="1">
    <location>
        <begin position="13"/>
        <end position="16"/>
    </location>
</feature>
<dbReference type="EMBL" id="X67119">
    <property type="protein sequence ID" value="CAA47566.1"/>
    <property type="molecule type" value="Genomic_DNA"/>
</dbReference>
<dbReference type="EMBL" id="X69198">
    <property type="protein sequence ID" value="CAA49007.1"/>
    <property type="molecule type" value="Genomic_DNA"/>
</dbReference>
<dbReference type="PIR" id="S33081">
    <property type="entry name" value="S33081"/>
</dbReference>
<dbReference type="SMR" id="P0DSY3"/>
<dbReference type="KEGG" id="vg:1486432"/>
<dbReference type="Proteomes" id="UP000002060">
    <property type="component" value="Segment"/>
</dbReference>
<dbReference type="GO" id="GO:0030430">
    <property type="term" value="C:host cell cytoplasm"/>
    <property type="evidence" value="ECO:0007669"/>
    <property type="project" value="UniProtKB-SubCell"/>
</dbReference>
<dbReference type="Gene3D" id="3.40.30.10">
    <property type="entry name" value="Glutaredoxin"/>
    <property type="match status" value="1"/>
</dbReference>
<dbReference type="InterPro" id="IPR008554">
    <property type="entry name" value="Glutaredoxin-like"/>
</dbReference>
<dbReference type="InterPro" id="IPR036249">
    <property type="entry name" value="Thioredoxin-like_sf"/>
</dbReference>
<dbReference type="Pfam" id="PF05768">
    <property type="entry name" value="Glrx-like"/>
    <property type="match status" value="1"/>
</dbReference>
<dbReference type="SUPFAM" id="SSF52833">
    <property type="entry name" value="Thioredoxin-like"/>
    <property type="match status" value="1"/>
</dbReference>
<organism>
    <name type="scientific">Variola virus (isolate Human/India/Ind3/1967)</name>
    <name type="common">VARV</name>
    <name type="synonym">Smallpox virus</name>
    <dbReference type="NCBI Taxonomy" id="587200"/>
    <lineage>
        <taxon>Viruses</taxon>
        <taxon>Varidnaviria</taxon>
        <taxon>Bamfordvirae</taxon>
        <taxon>Nucleocytoviricota</taxon>
        <taxon>Pokkesviricetes</taxon>
        <taxon>Chitovirales</taxon>
        <taxon>Poxviridae</taxon>
        <taxon>Chordopoxvirinae</taxon>
        <taxon>Orthopoxvirus</taxon>
        <taxon>Variola virus</taxon>
    </lineage>
</organism>
<sequence>MKNVLIIFGKPYCSICENVSEAVEELKSEYDILHVDILSFFLKDGDSSMLGDVKRGTLIGNFAAHLSNYIVSIFKYNPQTKQMAFVDINKSLDFTKTDKSLVNLEILKSEIEKANYGVWPPVTE</sequence>
<accession>P0DSY3</accession>
<accession>P32994</accession>
<accession>Q76Q24</accession>
<proteinExistence type="inferred from homology"/>
<name>GLRX2_VAR67</name>
<organismHost>
    <name type="scientific">Homo sapiens</name>
    <name type="common">Human</name>
    <dbReference type="NCBI Taxonomy" id="9606"/>
</organismHost>
<keyword id="KW-1015">Disulfide bond</keyword>
<keyword id="KW-0249">Electron transport</keyword>
<keyword id="KW-1035">Host cytoplasm</keyword>
<keyword id="KW-0676">Redox-active center</keyword>
<keyword id="KW-1185">Reference proteome</keyword>
<keyword id="KW-0813">Transport</keyword>
<protein>
    <recommendedName>
        <fullName>Glutaredoxin-2</fullName>
    </recommendedName>
</protein>
<reference key="1">
    <citation type="journal article" date="1993" name="Virus Res.">
        <title>Analysis of the nucleotide sequence of a 43 kbp segment of the genome of variola virus India-1967 strain.</title>
        <authorList>
            <person name="Shchelkunov S.N."/>
            <person name="Blinov V.M."/>
            <person name="Resenchuk S.M."/>
            <person name="Totmenin A.V."/>
            <person name="Sandakhchiev L.S."/>
        </authorList>
    </citation>
    <scope>NUCLEOTIDE SEQUENCE [GENOMIC DNA]</scope>
</reference>
<reference key="2">
    <citation type="journal article" date="1993" name="Virus Res.">
        <title>Nucleotide sequence analysis of variola virus HindIII M, L, I genome fragments.</title>
        <authorList>
            <person name="Shchelkunov S.N."/>
            <person name="Blinov V.M."/>
            <person name="Totmenin A.V."/>
            <person name="Marennikova S.S."/>
            <person name="Kolykhalov A.A."/>
            <person name="Frolov I.V."/>
            <person name="Chizhikov V.E."/>
            <person name="Gytorov V.V."/>
            <person name="Gashikov P.V."/>
            <person name="Belanov E.F."/>
            <person name="Belavin P.A."/>
            <person name="Resenchuk S.M."/>
            <person name="Andzhaparidze O.G."/>
            <person name="Sandakhchiev L.S."/>
        </authorList>
    </citation>
    <scope>NUCLEOTIDE SEQUENCE [GENOMIC DNA]</scope>
</reference>
<reference key="3">
    <citation type="journal article" date="1993" name="FEBS Lett.">
        <title>Genes of variola and vaccinia viruses necessary to overcome the host protective mechanisms.</title>
        <authorList>
            <person name="Shchelkunov S.N."/>
            <person name="Blinov V.M."/>
            <person name="Sandakhchiev L.S."/>
        </authorList>
    </citation>
    <scope>NUCLEOTIDE SEQUENCE [LARGE SCALE GENOMIC DNA]</scope>
</reference>
<gene>
    <name type="primary">OPG088</name>
    <name type="ORF">G4L</name>
</gene>
<evidence type="ECO:0000250" key="1">
    <source>
        <dbReference type="UniProtKB" id="P68460"/>
    </source>
</evidence>
<evidence type="ECO:0000305" key="2"/>